<gene>
    <name evidence="1" type="primary">msrP</name>
    <name type="ordered locus">MCA0844</name>
</gene>
<accession>Q60AK7</accession>
<sequence>MRKTSSPRIAPSEITPRDLYHDRRRFMQAAAGAAAAALWPHWLSAGEKLPGVRKTDHVLPDALTPFEDVAHYNNFYEFGTDKETPSRTAGSLKTRPWTVSVEGEVQKPKLFDVDDLLKLAPLEERIYRLRCVEGWSMVVPWVGFPLAELIKRVEPTGNAKFVEFITLYDPARMPGQKSSVLDWPYREALRLDEAMHPLTLLVFGLYGEVLPNQNGAPVRVVVPWKYGFKSAKSIVRIRFVEQQPVSTWTRAVPSEYGFYANVNPQVDHPRWSQAKERRLGEFFKRPTLMFNGYAEQVAHLYAGMDLKKFF</sequence>
<name>MSRP_METCA</name>
<comment type="function">
    <text evidence="1">Part of the MsrPQ system that repairs oxidized periplasmic proteins containing methionine sulfoxide residues (Met-O), using respiratory chain electrons. Thus protects these proteins from oxidative-stress damage caused by reactive species of oxygen and chlorine generated by the host defense mechanisms. MsrPQ is essential for the maintenance of envelope integrity under bleach stress, rescuing a wide series of structurally unrelated periplasmic proteins from methionine oxidation. The catalytic subunit MsrP is non-stereospecific, being able to reduce both (R-) and (S-) diastereoisomers of methionine sulfoxide.</text>
</comment>
<comment type="catalytic activity">
    <reaction evidence="1">
        <text>L-methionyl-[protein] + a quinone + H2O = L-methionyl-(S)-S-oxide-[protein] + a quinol</text>
        <dbReference type="Rhea" id="RHEA:51292"/>
        <dbReference type="Rhea" id="RHEA-COMP:12313"/>
        <dbReference type="Rhea" id="RHEA-COMP:12315"/>
        <dbReference type="ChEBI" id="CHEBI:15377"/>
        <dbReference type="ChEBI" id="CHEBI:16044"/>
        <dbReference type="ChEBI" id="CHEBI:24646"/>
        <dbReference type="ChEBI" id="CHEBI:44120"/>
        <dbReference type="ChEBI" id="CHEBI:132124"/>
    </reaction>
</comment>
<comment type="catalytic activity">
    <reaction evidence="1">
        <text>L-methionyl-[protein] + a quinone + H2O = L-methionyl-(R)-S-oxide-[protein] + a quinol</text>
        <dbReference type="Rhea" id="RHEA:51296"/>
        <dbReference type="Rhea" id="RHEA-COMP:12313"/>
        <dbReference type="Rhea" id="RHEA-COMP:12314"/>
        <dbReference type="ChEBI" id="CHEBI:15377"/>
        <dbReference type="ChEBI" id="CHEBI:16044"/>
        <dbReference type="ChEBI" id="CHEBI:24646"/>
        <dbReference type="ChEBI" id="CHEBI:45764"/>
        <dbReference type="ChEBI" id="CHEBI:132124"/>
    </reaction>
</comment>
<comment type="cofactor">
    <cofactor evidence="1">
        <name>Mo-molybdopterin</name>
        <dbReference type="ChEBI" id="CHEBI:71302"/>
    </cofactor>
    <text evidence="1">Binds 1 Mo-molybdopterin (Mo-MPT) cofactor per subunit.</text>
</comment>
<comment type="subunit">
    <text evidence="1">Heterodimer of a catalytic subunit (MsrP) and a heme-binding subunit (MsrQ).</text>
</comment>
<comment type="subcellular location">
    <subcellularLocation>
        <location evidence="1">Periplasm</location>
    </subcellularLocation>
    <text evidence="1">Is attached to the inner membrane when interacting with the MsrQ subunit.</text>
</comment>
<comment type="PTM">
    <text evidence="1">Predicted to be exported by the Tat system. The position of the signal peptide cleavage has not been experimentally proven.</text>
</comment>
<comment type="similarity">
    <text evidence="1">Belongs to the MsrP family.</text>
</comment>
<reference key="1">
    <citation type="journal article" date="2004" name="PLoS Biol.">
        <title>Genomic insights into methanotrophy: the complete genome sequence of Methylococcus capsulatus (Bath).</title>
        <authorList>
            <person name="Ward N.L."/>
            <person name="Larsen O."/>
            <person name="Sakwa J."/>
            <person name="Bruseth L."/>
            <person name="Khouri H.M."/>
            <person name="Durkin A.S."/>
            <person name="Dimitrov G."/>
            <person name="Jiang L."/>
            <person name="Scanlan D."/>
            <person name="Kang K.H."/>
            <person name="Lewis M.R."/>
            <person name="Nelson K.E."/>
            <person name="Methe B.A."/>
            <person name="Wu M."/>
            <person name="Heidelberg J.F."/>
            <person name="Paulsen I.T."/>
            <person name="Fouts D.E."/>
            <person name="Ravel J."/>
            <person name="Tettelin H."/>
            <person name="Ren Q."/>
            <person name="Read T.D."/>
            <person name="DeBoy R.T."/>
            <person name="Seshadri R."/>
            <person name="Salzberg S.L."/>
            <person name="Jensen H.B."/>
            <person name="Birkeland N.K."/>
            <person name="Nelson W.C."/>
            <person name="Dodson R.J."/>
            <person name="Grindhaug S.H."/>
            <person name="Holt I.E."/>
            <person name="Eidhammer I."/>
            <person name="Jonasen I."/>
            <person name="Vanaken S."/>
            <person name="Utterback T.R."/>
            <person name="Feldblyum T.V."/>
            <person name="Fraser C.M."/>
            <person name="Lillehaug J.R."/>
            <person name="Eisen J.A."/>
        </authorList>
    </citation>
    <scope>NUCLEOTIDE SEQUENCE [LARGE SCALE GENOMIC DNA]</scope>
    <source>
        <strain>ATCC 33009 / NCIMB 11132 / Bath</strain>
    </source>
</reference>
<protein>
    <recommendedName>
        <fullName evidence="1">Protein-methionine-sulfoxide reductase catalytic subunit MsrP</fullName>
        <ecNumber evidence="1">1.8.5.-</ecNumber>
    </recommendedName>
</protein>
<keyword id="KW-0479">Metal-binding</keyword>
<keyword id="KW-0500">Molybdenum</keyword>
<keyword id="KW-0560">Oxidoreductase</keyword>
<keyword id="KW-0574">Periplasm</keyword>
<keyword id="KW-1185">Reference proteome</keyword>
<keyword id="KW-0732">Signal</keyword>
<feature type="signal peptide" description="Tat-type signal" evidence="1">
    <location>
        <begin position="1"/>
        <end position="45"/>
    </location>
</feature>
<feature type="chain" id="PRO_0000070689" description="Protein-methionine-sulfoxide reductase catalytic subunit MsrP" evidence="1">
    <location>
        <begin position="46"/>
        <end position="310"/>
    </location>
</feature>
<feature type="binding site" evidence="1">
    <location>
        <position position="73"/>
    </location>
    <ligand>
        <name>Mo-molybdopterin</name>
        <dbReference type="ChEBI" id="CHEBI:71302"/>
    </ligand>
</feature>
<feature type="binding site" evidence="1">
    <location>
        <begin position="76"/>
        <end position="77"/>
    </location>
    <ligand>
        <name>Mo-molybdopterin</name>
        <dbReference type="ChEBI" id="CHEBI:71302"/>
    </ligand>
</feature>
<feature type="binding site" evidence="1">
    <location>
        <position position="131"/>
    </location>
    <ligand>
        <name>Mo-molybdopterin</name>
        <dbReference type="ChEBI" id="CHEBI:71302"/>
    </ligand>
    <ligandPart>
        <name>Mo</name>
        <dbReference type="ChEBI" id="CHEBI:28685"/>
    </ligandPart>
</feature>
<feature type="binding site" evidence="1">
    <location>
        <position position="166"/>
    </location>
    <ligand>
        <name>Mo-molybdopterin</name>
        <dbReference type="ChEBI" id="CHEBI:71302"/>
    </ligand>
</feature>
<feature type="binding site" evidence="1">
    <location>
        <position position="214"/>
    </location>
    <ligand>
        <name>Mo-molybdopterin</name>
        <dbReference type="ChEBI" id="CHEBI:71302"/>
    </ligand>
</feature>
<feature type="binding site" evidence="1">
    <location>
        <position position="219"/>
    </location>
    <ligand>
        <name>Mo-molybdopterin</name>
        <dbReference type="ChEBI" id="CHEBI:71302"/>
    </ligand>
</feature>
<feature type="binding site" evidence="1">
    <location>
        <begin position="230"/>
        <end position="232"/>
    </location>
    <ligand>
        <name>Mo-molybdopterin</name>
        <dbReference type="ChEBI" id="CHEBI:71302"/>
    </ligand>
</feature>
<organism>
    <name type="scientific">Methylococcus capsulatus (strain ATCC 33009 / NCIMB 11132 / Bath)</name>
    <dbReference type="NCBI Taxonomy" id="243233"/>
    <lineage>
        <taxon>Bacteria</taxon>
        <taxon>Pseudomonadati</taxon>
        <taxon>Pseudomonadota</taxon>
        <taxon>Gammaproteobacteria</taxon>
        <taxon>Methylococcales</taxon>
        <taxon>Methylococcaceae</taxon>
        <taxon>Methylococcus</taxon>
    </lineage>
</organism>
<proteinExistence type="inferred from homology"/>
<evidence type="ECO:0000255" key="1">
    <source>
        <dbReference type="HAMAP-Rule" id="MF_01206"/>
    </source>
</evidence>
<dbReference type="EC" id="1.8.5.-" evidence="1"/>
<dbReference type="EMBL" id="AE017282">
    <property type="protein sequence ID" value="AAU93062.1"/>
    <property type="molecule type" value="Genomic_DNA"/>
</dbReference>
<dbReference type="RefSeq" id="WP_010960166.1">
    <property type="nucleotide sequence ID" value="NC_002977.6"/>
</dbReference>
<dbReference type="SMR" id="Q60AK7"/>
<dbReference type="STRING" id="243233.MCA0844"/>
<dbReference type="GeneID" id="88223153"/>
<dbReference type="KEGG" id="mca:MCA0844"/>
<dbReference type="eggNOG" id="COG2041">
    <property type="taxonomic scope" value="Bacteria"/>
</dbReference>
<dbReference type="HOGENOM" id="CLU_045520_0_0_6"/>
<dbReference type="Proteomes" id="UP000006821">
    <property type="component" value="Chromosome"/>
</dbReference>
<dbReference type="GO" id="GO:0042597">
    <property type="term" value="C:periplasmic space"/>
    <property type="evidence" value="ECO:0007669"/>
    <property type="project" value="UniProtKB-SubCell"/>
</dbReference>
<dbReference type="GO" id="GO:0046872">
    <property type="term" value="F:metal ion binding"/>
    <property type="evidence" value="ECO:0007669"/>
    <property type="project" value="UniProtKB-KW"/>
</dbReference>
<dbReference type="GO" id="GO:0043546">
    <property type="term" value="F:molybdopterin cofactor binding"/>
    <property type="evidence" value="ECO:0007669"/>
    <property type="project" value="UniProtKB-UniRule"/>
</dbReference>
<dbReference type="GO" id="GO:0016672">
    <property type="term" value="F:oxidoreductase activity, acting on a sulfur group of donors, quinone or similar compound as acceptor"/>
    <property type="evidence" value="ECO:0007669"/>
    <property type="project" value="UniProtKB-UniRule"/>
</dbReference>
<dbReference type="GO" id="GO:0030091">
    <property type="term" value="P:protein repair"/>
    <property type="evidence" value="ECO:0007669"/>
    <property type="project" value="UniProtKB-UniRule"/>
</dbReference>
<dbReference type="Gene3D" id="3.90.420.10">
    <property type="entry name" value="Oxidoreductase, molybdopterin-binding domain"/>
    <property type="match status" value="1"/>
</dbReference>
<dbReference type="HAMAP" id="MF_01206">
    <property type="entry name" value="MsrP"/>
    <property type="match status" value="1"/>
</dbReference>
<dbReference type="InterPro" id="IPR022867">
    <property type="entry name" value="MsrP"/>
</dbReference>
<dbReference type="InterPro" id="IPR000572">
    <property type="entry name" value="OxRdtase_Mopterin-bd_dom"/>
</dbReference>
<dbReference type="InterPro" id="IPR036374">
    <property type="entry name" value="OxRdtase_Mopterin-bd_sf"/>
</dbReference>
<dbReference type="InterPro" id="IPR006311">
    <property type="entry name" value="TAT_signal"/>
</dbReference>
<dbReference type="NCBIfam" id="NF003767">
    <property type="entry name" value="PRK05363.1"/>
    <property type="match status" value="1"/>
</dbReference>
<dbReference type="PANTHER" id="PTHR43032">
    <property type="entry name" value="PROTEIN-METHIONINE-SULFOXIDE REDUCTASE"/>
    <property type="match status" value="1"/>
</dbReference>
<dbReference type="PANTHER" id="PTHR43032:SF3">
    <property type="entry name" value="PROTEIN-METHIONINE-SULFOXIDE REDUCTASE CATALYTIC SUBUNIT MSRP"/>
    <property type="match status" value="1"/>
</dbReference>
<dbReference type="Pfam" id="PF00174">
    <property type="entry name" value="Oxidored_molyb"/>
    <property type="match status" value="1"/>
</dbReference>
<dbReference type="SUPFAM" id="SSF56524">
    <property type="entry name" value="Oxidoreductase molybdopterin-binding domain"/>
    <property type="match status" value="1"/>
</dbReference>
<dbReference type="PROSITE" id="PS51318">
    <property type="entry name" value="TAT"/>
    <property type="match status" value="1"/>
</dbReference>